<organismHost>
    <name type="scientific">Pan troglodytes</name>
    <name type="common">Chimpanzee</name>
    <dbReference type="NCBI Taxonomy" id="9598"/>
</organismHost>
<keyword id="KW-0014">AIDS</keyword>
<keyword id="KW-0053">Apoptosis</keyword>
<keyword id="KW-1165">Clathrin-mediated endocytosis of virus by host</keyword>
<keyword id="KW-0165">Cleavage on pair of basic residues</keyword>
<keyword id="KW-0175">Coiled coil</keyword>
<keyword id="KW-1015">Disulfide bond</keyword>
<keyword id="KW-1170">Fusion of virus membrane with host endosomal membrane</keyword>
<keyword id="KW-1168">Fusion of virus membrane with host membrane</keyword>
<keyword id="KW-0325">Glycoprotein</keyword>
<keyword id="KW-1032">Host cell membrane</keyword>
<keyword id="KW-1039">Host endosome</keyword>
<keyword id="KW-1043">Host membrane</keyword>
<keyword id="KW-0945">Host-virus interaction</keyword>
<keyword id="KW-0449">Lipoprotein</keyword>
<keyword id="KW-0472">Membrane</keyword>
<keyword id="KW-0564">Palmitate</keyword>
<keyword id="KW-1185">Reference proteome</keyword>
<keyword id="KW-0732">Signal</keyword>
<keyword id="KW-0812">Transmembrane</keyword>
<keyword id="KW-1133">Transmembrane helix</keyword>
<keyword id="KW-1161">Viral attachment to host cell</keyword>
<keyword id="KW-0261">Viral envelope protein</keyword>
<keyword id="KW-0899">Viral immunoevasion</keyword>
<keyword id="KW-1162">Viral penetration into host cytoplasm</keyword>
<keyword id="KW-0946">Virion</keyword>
<keyword id="KW-1164">Virus endocytosis by host</keyword>
<keyword id="KW-1160">Virus entry into host cell</keyword>
<feature type="signal peptide" evidence="1">
    <location>
        <begin position="1"/>
        <end position="35"/>
    </location>
</feature>
<feature type="chain" id="PRO_0000441725" description="Envelope glycoprotein gp160" evidence="1">
    <location>
        <begin position="36"/>
        <end position="880"/>
    </location>
</feature>
<feature type="chain" id="PRO_0000441726" description="Surface protein gp120" evidence="1">
    <location>
        <begin position="36"/>
        <end position="527"/>
    </location>
</feature>
<feature type="chain" id="PRO_0000249353" description="Transmembrane protein gp41" evidence="1">
    <location>
        <begin position="528"/>
        <end position="880"/>
    </location>
</feature>
<feature type="topological domain" description="Extracellular" evidence="1">
    <location>
        <begin position="36"/>
        <end position="701"/>
    </location>
</feature>
<feature type="transmembrane region" description="Helical" evidence="1">
    <location>
        <begin position="702"/>
        <end position="722"/>
    </location>
</feature>
<feature type="topological domain" description="Cytoplasmic" evidence="1">
    <location>
        <begin position="723"/>
        <end position="880"/>
    </location>
</feature>
<feature type="region of interest" description="V1" evidence="1">
    <location>
        <begin position="134"/>
        <end position="173"/>
    </location>
</feature>
<feature type="region of interest" description="V2" evidence="1">
    <location>
        <begin position="174"/>
        <end position="220"/>
    </location>
</feature>
<feature type="region of interest" description="V3" evidence="1">
    <location>
        <begin position="319"/>
        <end position="352"/>
    </location>
</feature>
<feature type="region of interest" description="CD4-binding loop" evidence="1">
    <location>
        <begin position="389"/>
        <end position="399"/>
    </location>
</feature>
<feature type="region of interest" description="V4" evidence="1">
    <location>
        <begin position="410"/>
        <end position="434"/>
    </location>
</feature>
<feature type="region of interest" description="V5" evidence="1">
    <location>
        <begin position="479"/>
        <end position="487"/>
    </location>
</feature>
<feature type="region of interest" description="Fusion peptide" evidence="1">
    <location>
        <begin position="528"/>
        <end position="549"/>
    </location>
</feature>
<feature type="region of interest" description="Immunosuppression" evidence="1">
    <location>
        <begin position="591"/>
        <end position="609"/>
    </location>
</feature>
<feature type="region of interest" description="MPER; binding to GalCer" evidence="1">
    <location>
        <begin position="679"/>
        <end position="700"/>
    </location>
</feature>
<feature type="coiled-coil region" evidence="1">
    <location>
        <begin position="650"/>
        <end position="684"/>
    </location>
</feature>
<feature type="short sequence motif" description="YXXL motif; contains endocytosis signal" evidence="1">
    <location>
        <begin position="729"/>
        <end position="732"/>
    </location>
</feature>
<feature type="short sequence motif" description="Di-leucine internalization motif" evidence="1">
    <location>
        <begin position="879"/>
        <end position="880"/>
    </location>
</feature>
<feature type="site" description="Cleavage; by host furin" evidence="1">
    <location>
        <begin position="527"/>
        <end position="528"/>
    </location>
</feature>
<feature type="lipid moiety-binding region" description="S-palmitoyl cysteine; by host" evidence="1">
    <location>
        <position position="781"/>
    </location>
</feature>
<feature type="glycosylation site" description="N-linked (GlcNAc...) asparagine; by host" evidence="1">
    <location>
        <position position="91"/>
    </location>
</feature>
<feature type="glycosylation site" description="N-linked (GlcNAc...) asparagine; by host" evidence="1">
    <location>
        <position position="133"/>
    </location>
</feature>
<feature type="glycosylation site" description="N-linked (GlcNAc...) asparagine; by host" evidence="1">
    <location>
        <position position="145"/>
    </location>
</feature>
<feature type="glycosylation site" description="N-linked (GlcNAc...) asparagine; by host" evidence="1">
    <location>
        <position position="148"/>
    </location>
</feature>
<feature type="glycosylation site" description="N-linked (GlcNAc...) asparagine; by host" evidence="1">
    <location>
        <position position="157"/>
    </location>
</feature>
<feature type="glycosylation site" description="N-linked (GlcNAc...) asparagine; by host" evidence="1">
    <location>
        <position position="163"/>
    </location>
</feature>
<feature type="glycosylation site" description="N-linked (GlcNAc...) asparagine; by host" evidence="1">
    <location>
        <position position="173"/>
    </location>
</feature>
<feature type="glycosylation site" description="N-linked (GlcNAc...) asparagine; by host" evidence="1">
    <location>
        <position position="177"/>
    </location>
</feature>
<feature type="glycosylation site" description="N-linked (GlcNAc...) asparagine; by host" evidence="1">
    <location>
        <position position="221"/>
    </location>
</feature>
<feature type="glycosylation site" description="N-linked (GlcNAc...) asparagine; by host" evidence="1">
    <location>
        <position position="256"/>
    </location>
</feature>
<feature type="glycosylation site" description="N-linked (GlcNAc...) asparagine; by host" evidence="1">
    <location>
        <position position="265"/>
    </location>
</feature>
<feature type="glycosylation site" description="N-linked (GlcNAc...) asparagine; by host" evidence="1">
    <location>
        <position position="286"/>
    </location>
</feature>
<feature type="glycosylation site" description="N-linked (GlcNAc...) asparagine; by host" evidence="1">
    <location>
        <position position="299"/>
    </location>
</feature>
<feature type="glycosylation site" description="N-linked (GlcNAc...) asparagine; by host" evidence="1">
    <location>
        <position position="312"/>
    </location>
</feature>
<feature type="glycosylation site" description="N-linked (GlcNAc...) asparagine; by host" evidence="1">
    <location>
        <position position="318"/>
    </location>
</feature>
<feature type="glycosylation site" description="N-linked (GlcNAc...) asparagine; by host" evidence="1">
    <location>
        <position position="324"/>
    </location>
</feature>
<feature type="glycosylation site" description="N-linked (GlcNAc...) asparagine; by host" evidence="1">
    <location>
        <position position="356"/>
    </location>
</feature>
<feature type="glycosylation site" description="N-linked (GlcNAc...) asparagine; by host" evidence="1">
    <location>
        <position position="372"/>
    </location>
</feature>
<feature type="glycosylation site" description="N-linked (GlcNAc...) asparagine; by host" evidence="1">
    <location>
        <position position="381"/>
    </location>
</feature>
<feature type="glycosylation site" description="N-linked (GlcNAc...) asparagine; by host" evidence="1">
    <location>
        <position position="411"/>
    </location>
</feature>
<feature type="glycosylation site" description="N-linked (GlcNAc...) asparagine; by host" evidence="1">
    <location>
        <position position="417"/>
    </location>
</feature>
<feature type="glycosylation site" description="N-linked (GlcNAc...) asparagine; by host" evidence="1">
    <location>
        <position position="423"/>
    </location>
</feature>
<feature type="glycosylation site" description="N-linked (GlcNAc...) asparagine; by host" evidence="1">
    <location>
        <position position="429"/>
    </location>
</feature>
<feature type="glycosylation site" description="N-linked (GlcNAc...) asparagine; by host" evidence="1">
    <location>
        <position position="464"/>
    </location>
</feature>
<feature type="glycosylation site" description="N-linked (GlcNAc...) asparagine; by host" evidence="1">
    <location>
        <position position="479"/>
    </location>
</feature>
<feature type="glycosylation site" description="N-linked (GlcNAc...) asparagine; by host" evidence="1">
    <location>
        <position position="628"/>
    </location>
</feature>
<feature type="glycosylation site" description="N-linked (GlcNAc...) asparagine; by host" evidence="1">
    <location>
        <position position="633"/>
    </location>
</feature>
<feature type="glycosylation site" description="N-linked (GlcNAc...) asparagine; by host" evidence="1">
    <location>
        <position position="642"/>
    </location>
</feature>
<feature type="glycosylation site" description="N-linked (GlcNAc...) asparagine; by host" evidence="1">
    <location>
        <position position="654"/>
    </location>
</feature>
<feature type="disulfide bond" evidence="1">
    <location>
        <begin position="57"/>
        <end position="77"/>
    </location>
</feature>
<feature type="disulfide bond" evidence="1">
    <location>
        <begin position="122"/>
        <end position="229"/>
    </location>
</feature>
<feature type="disulfide bond" evidence="1">
    <location>
        <begin position="129"/>
        <end position="220"/>
    </location>
</feature>
<feature type="disulfide bond" evidence="1">
    <location>
        <begin position="134"/>
        <end position="174"/>
    </location>
</feature>
<feature type="disulfide bond" evidence="1">
    <location>
        <begin position="242"/>
        <end position="271"/>
    </location>
</feature>
<feature type="disulfide bond" evidence="1">
    <location>
        <begin position="252"/>
        <end position="263"/>
    </location>
</feature>
<feature type="disulfide bond" evidence="1">
    <location>
        <begin position="319"/>
        <end position="353"/>
    </location>
</feature>
<feature type="disulfide bond" evidence="1">
    <location>
        <begin position="403"/>
        <end position="461"/>
    </location>
</feature>
<feature type="disulfide bond" evidence="1">
    <location>
        <begin position="410"/>
        <end position="434"/>
    </location>
</feature>
<feature type="disulfide bond" evidence="1">
    <location>
        <begin position="615"/>
        <end position="621"/>
    </location>
</feature>
<evidence type="ECO:0000255" key="1">
    <source>
        <dbReference type="HAMAP-Rule" id="MF_04083"/>
    </source>
</evidence>
<protein>
    <recommendedName>
        <fullName evidence="1">Envelope glycoprotein gp160</fullName>
    </recommendedName>
    <alternativeName>
        <fullName evidence="1">Env polyprotein</fullName>
    </alternativeName>
    <component>
        <recommendedName>
            <fullName evidence="1">Surface protein gp120</fullName>
            <shortName evidence="1">SU</shortName>
        </recommendedName>
        <alternativeName>
            <fullName evidence="1">Glycoprotein 120</fullName>
            <shortName evidence="1">gp120</shortName>
        </alternativeName>
    </component>
    <component>
        <recommendedName>
            <fullName evidence="1">Transmembrane protein gp41</fullName>
            <shortName evidence="1">TM</shortName>
        </recommendedName>
        <alternativeName>
            <fullName evidence="1">Glycoprotein 41</fullName>
            <shortName evidence="1">gp41</shortName>
        </alternativeName>
    </component>
</protein>
<comment type="function">
    <molecule>Surface protein gp120</molecule>
    <text evidence="1">Attaches the virus to the host lymphoid cell by binding to the primary receptor CD4. This interaction induces a structural rearrangement creating a high affinity binding site for a chemokine coreceptor like CXCR4 and/or CCR5. Acts as a ligand for CD209/DC-SIGN and CLEC4M/DC-SIGNR, which are respectively found on dendritic cells (DCs), and on endothelial cells of liver sinusoids and lymph node sinuses. These interactions allow capture of viral particles at mucosal surfaces by these cells and subsequent transmission to permissive cells. HIV subverts the migration properties of dendritic cells to gain access to CD4+ T-cells in lymph nodes. Virus transmission to permissive T-cells occurs either in trans (without DCs infection, through viral capture and transmission), or in cis (following DCs productive infection, through the usual CD4-gp120 interaction), thereby inducing a robust infection. In trans infection, bound virions remain infectious over days and it is proposed that they are not degraded, but protected in non-lysosomal acidic organelles within the DCs close to the cell membrane thus contributing to the viral infectious potential during DCs' migration from the periphery to the lymphoid tissues. On arrival at lymphoid tissues, intact virions recycle back to DCs' cell surface allowing virus transmission to CD4+ T-cells.</text>
</comment>
<comment type="function">
    <molecule>Transmembrane protein gp41</molecule>
    <text evidence="1">Acts as a class I viral fusion protein. Under the current model, the protein has at least 3 conformational states: pre-fusion native state, pre-hairpin intermediate state, and post-fusion hairpin state. During fusion of viral and target intracellular membranes, the coiled coil regions (heptad repeats) assume a trimer-of-hairpins structure, positioning the fusion peptide in close proximity to the C-terminal region of the ectodomain. The formation of this structure appears to drive apposition and subsequent fusion of viral and target cell membranes. Complete fusion occurs in host cell endosomes and is dynamin-dependent, however some lipid transfer might occur at the plasma membrane. The virus undergoes clathrin-dependent internalization long before endosomal fusion, thus minimizing the surface exposure of conserved viral epitopes during fusion and reducing the efficacy of inhibitors targeting these epitopes. Membranes fusion leads to delivery of the nucleocapsid into the cytoplasm.</text>
</comment>
<comment type="function">
    <molecule>Envelope glycoprotein gp160</molecule>
    <text evidence="1">Oligomerizes in the host endoplasmic reticulum into predominantly trimers. In a second time, gp160 transits in the host Golgi, where glycosylation is completed. The precursor is then proteolytically cleaved in the trans-Golgi and thereby activated by cellular furin or furin-like proteases to produce gp120 and gp41.</text>
</comment>
<comment type="subunit">
    <molecule>Surface protein gp120</molecule>
    <text evidence="1">The mature envelope protein (Env) consists of a homotrimer of non-covalently associated gp120-gp41 heterodimers. The resulting complex protrudes from the virus surface as a spike. There seems to be as few as 10 spikes on the average virion. Interacts with host CD4, CCR5 and CXCR4. Gp120 also interacts with the C-type lectins CD209/DC-SIGN and CLEC4M/DC-SIGNR (collectively referred to as DC-SIGN(R)). Gp120 and gp41 interact with GalCer. Gp120 interacts with host ITGA4/ITGB7 complex; on CD4+ T-cells, this interaction results in rapid activation of integrin ITGAL/LFA-1, which facilitates efficient cell-to-cell spreading of HIV-1. Gp120 interacts with cell-associated heparan sulfate; this interaction increases virus infectivity on permissive cells and may be involved in infection of CD4- cells.</text>
</comment>
<comment type="subunit">
    <molecule>Transmembrane protein gp41</molecule>
    <text evidence="1">The mature envelope protein (Env) consists of a homotrimer of non-covalently associated gp120-gp41 heterodimers. The resulting complex protrudes from the virus surface as a spike. There seems to be as few as 10 spikes on the average virion.</text>
</comment>
<comment type="subcellular location">
    <molecule>Surface protein gp120</molecule>
    <subcellularLocation>
        <location evidence="1">Virion membrane</location>
        <topology evidence="1">Peripheral membrane protein</topology>
    </subcellularLocation>
    <subcellularLocation>
        <location evidence="1">Host cell membrane</location>
        <topology evidence="1">Peripheral membrane protein</topology>
    </subcellularLocation>
    <subcellularLocation>
        <location evidence="1">Host endosome membrane</location>
        <topology evidence="1">Single-pass type I membrane protein</topology>
    </subcellularLocation>
    <text evidence="1">The surface protein is not anchored to the viral envelope, but associates with the extravirion surface through its binding to TM. It is probably concentrated at the site of budding and incorporated into the virions possibly by contacts between the cytoplasmic tail of Env and the N-terminus of Gag.</text>
</comment>
<comment type="subcellular location">
    <molecule>Transmembrane protein gp41</molecule>
    <subcellularLocation>
        <location evidence="1">Virion membrane</location>
        <topology evidence="1">Single-pass type I membrane protein</topology>
    </subcellularLocation>
    <subcellularLocation>
        <location evidence="1">Host cell membrane</location>
        <topology evidence="1">Single-pass type I membrane protein</topology>
    </subcellularLocation>
    <subcellularLocation>
        <location evidence="1">Host endosome membrane</location>
        <topology evidence="1">Single-pass type I membrane protein</topology>
    </subcellularLocation>
    <text evidence="1">It is probably concentrated at the site of budding and incorporated into the virions possibly by contacts between the cytoplasmic tail of Env and the N-terminus of Gag.</text>
</comment>
<comment type="domain">
    <text evidence="1">Some of the most genetically diverse regions of the viral genome are present in Env. They are called variable regions 1 through 5 (V1 through V5). Coreceptor usage of gp120 is determined mainly by the primary structure of the third variable region (V3) in the outer domain of gp120. The sequence of V3 determines which coreceptor, CCR5 and/or CXCR4 (corresponding to R5/macrophage, X4/T cell and R5X4/T cell and macrophage tropism), is used to trigger the fusion potential of the Env complex, and hence which cells the virus can infect. Binding to CCR5 involves a region adjacent in addition to V3.</text>
</comment>
<comment type="domain">
    <text evidence="1">The membrane proximal external region (MPER) present in gp41 is a tryptophan-rich region recognized by the antibodies 2F5, Z13, and 4E10. MPER seems to play a role in fusion.</text>
</comment>
<comment type="domain">
    <text evidence="1">The 17 amino acids long immunosuppressive region is present in many retroviral envelope proteins. Synthetic peptides derived from this relatively conserved sequence inhibit immune function in vitro and in vivo.</text>
</comment>
<comment type="domain">
    <text evidence="1">The YXXL motif is involved in determining the exact site of viral release at the surface of infected mononuclear cells and promotes endocytosis. YXXL and di-leucine endocytosis motifs interact directly or indirectly with the clathrin adapter complexes, opperate independently, and their activities are not additive.</text>
</comment>
<comment type="domain">
    <text evidence="1">The CD4-binding region is targeted by the antibody b12.</text>
</comment>
<comment type="PTM">
    <text evidence="1">Highly glycosylated by host. The high number of glycan on the protein is reffered to as 'glycan shield' because it contributes to hide protein sequence from adaptive immune system.</text>
</comment>
<comment type="PTM">
    <text evidence="1">Palmitoylation of the transmembrane protein and of Env polyprotein (prior to its proteolytic cleavage) is essential for their association with host cell membrane lipid rafts. Palmitoylation is therefore required for envelope trafficking to classical lipid rafts, but not for viral replication.</text>
</comment>
<comment type="PTM">
    <text evidence="1">Specific enzymatic cleavages in vivo yield mature proteins. Envelope glycoproteins are synthesized as an inactive precursor that is heavily N-glycosylated and processed likely by host cell furin in the Golgi to yield the mature SU and TM proteins. The cleavage site between SU and TM requires the minimal sequence [KR]-X-[KR]-R. About 2 of the 9 disulfide bonds of gp41 are reduced by P4HB/PDI, following binding to CD4 receptor.</text>
</comment>
<comment type="miscellaneous">
    <text evidence="1">Inhibitors targeting HIV-1 viral envelope proteins are used as antiretroviral drugs. Attachment of virions to the cell surface via non-specific interactions and CD4 binding can be blocked by inhibitors that include cyanovirin-N, cyclotriazadisulfonamide analogs, PRO 2000, TNX 355 and PRO 542. In addition, BMS 806 can block CD4-induced conformational changes. Env interactions with the coreceptor molecules can be targeted by CCR5 antagonists including SCH-D, maraviroc (UK 427857) and aplaviroc (GW 873140), and the CXCR4 antagonist AMD 070. Fusion of viral and cellular membranes can be inhibited by peptides such as enfuvirtide and tifuvirtide (T 1249). Resistance to inhibitors associated with mutations in Env are observed. Most of the time, single mutations confer only a modest reduction in drug susceptibility. Combination of several mutations is usually required to develop a high-level drug resistance.</text>
</comment>
<comment type="miscellaneous">
    <text evidence="1">HIV-1 lineages are divided in three main groups, M (for Major), O (for Outlier), and N (for New, or Non-M, Non-O). The vast majority of strains found worldwide belong to the group M. Group O seems to be endemic to and largely confined to Cameroon and neighboring countries in West Central Africa, where these viruses represent a small minority of HIV-1 strains. The group N is represented by a limited number of isolates from Cameroonian persons. The group M is further subdivided in 9 clades or subtypes (A to D, F to H, J and K).</text>
</comment>
<comment type="similarity">
    <text evidence="1">Belongs to the HIV-1 env protein family.</text>
</comment>
<gene>
    <name evidence="1" type="primary">env</name>
</gene>
<proteinExistence type="inferred from homology"/>
<dbReference type="EMBL" id="DQ373063">
    <property type="protein sequence ID" value="ABD19481.1"/>
    <property type="molecule type" value="Genomic_RNA"/>
</dbReference>
<dbReference type="SMR" id="Q1A261"/>
<dbReference type="GlyCosmos" id="Q1A261">
    <property type="glycosylation" value="29 sites, No reported glycans"/>
</dbReference>
<dbReference type="Proteomes" id="UP000009152">
    <property type="component" value="Segment"/>
</dbReference>
<dbReference type="GO" id="GO:0044175">
    <property type="term" value="C:host cell endosome membrane"/>
    <property type="evidence" value="ECO:0007669"/>
    <property type="project" value="UniProtKB-SubCell"/>
</dbReference>
<dbReference type="GO" id="GO:0020002">
    <property type="term" value="C:host cell plasma membrane"/>
    <property type="evidence" value="ECO:0007669"/>
    <property type="project" value="UniProtKB-SubCell"/>
</dbReference>
<dbReference type="GO" id="GO:0016020">
    <property type="term" value="C:membrane"/>
    <property type="evidence" value="ECO:0007669"/>
    <property type="project" value="UniProtKB-UniRule"/>
</dbReference>
<dbReference type="GO" id="GO:0019031">
    <property type="term" value="C:viral envelope"/>
    <property type="evidence" value="ECO:0007669"/>
    <property type="project" value="UniProtKB-KW"/>
</dbReference>
<dbReference type="GO" id="GO:0055036">
    <property type="term" value="C:virion membrane"/>
    <property type="evidence" value="ECO:0007669"/>
    <property type="project" value="UniProtKB-SubCell"/>
</dbReference>
<dbReference type="GO" id="GO:0005198">
    <property type="term" value="F:structural molecule activity"/>
    <property type="evidence" value="ECO:0007669"/>
    <property type="project" value="UniProtKB-UniRule"/>
</dbReference>
<dbReference type="GO" id="GO:0075512">
    <property type="term" value="P:clathrin-dependent endocytosis of virus by host cell"/>
    <property type="evidence" value="ECO:0007669"/>
    <property type="project" value="UniProtKB-UniRule"/>
</dbReference>
<dbReference type="GO" id="GO:0039654">
    <property type="term" value="P:fusion of virus membrane with host endosome membrane"/>
    <property type="evidence" value="ECO:0007669"/>
    <property type="project" value="UniProtKB-UniRule"/>
</dbReference>
<dbReference type="GO" id="GO:0019064">
    <property type="term" value="P:fusion of virus membrane with host plasma membrane"/>
    <property type="evidence" value="ECO:0007669"/>
    <property type="project" value="UniProtKB-UniRule"/>
</dbReference>
<dbReference type="GO" id="GO:1903908">
    <property type="term" value="P:positive regulation of plasma membrane raft polarization"/>
    <property type="evidence" value="ECO:0007669"/>
    <property type="project" value="UniProtKB-UniRule"/>
</dbReference>
<dbReference type="GO" id="GO:1903911">
    <property type="term" value="P:positive regulation of receptor clustering"/>
    <property type="evidence" value="ECO:0007669"/>
    <property type="project" value="UniProtKB-UniRule"/>
</dbReference>
<dbReference type="GO" id="GO:0019082">
    <property type="term" value="P:viral protein processing"/>
    <property type="evidence" value="ECO:0007669"/>
    <property type="project" value="UniProtKB-UniRule"/>
</dbReference>
<dbReference type="GO" id="GO:0019062">
    <property type="term" value="P:virion attachment to host cell"/>
    <property type="evidence" value="ECO:0007669"/>
    <property type="project" value="UniProtKB-UniRule"/>
</dbReference>
<dbReference type="CDD" id="cd09909">
    <property type="entry name" value="HIV-1-like_HR1-HR2"/>
    <property type="match status" value="1"/>
</dbReference>
<dbReference type="FunFam" id="1.10.287.210:FF:000001">
    <property type="entry name" value="Envelope glycoprotein gp160"/>
    <property type="match status" value="1"/>
</dbReference>
<dbReference type="FunFam" id="1.20.5.490:FF:000001">
    <property type="entry name" value="Envelope glycoprotein gp160"/>
    <property type="match status" value="1"/>
</dbReference>
<dbReference type="Gene3D" id="1.10.287.210">
    <property type="match status" value="1"/>
</dbReference>
<dbReference type="Gene3D" id="2.170.40.20">
    <property type="entry name" value="Human immunodeficiency virus 1, Gp160, envelope glycoprotein"/>
    <property type="match status" value="3"/>
</dbReference>
<dbReference type="Gene3D" id="1.20.5.490">
    <property type="entry name" value="Single helix bin"/>
    <property type="match status" value="1"/>
</dbReference>
<dbReference type="HAMAP" id="MF_04083">
    <property type="entry name" value="HIV_ENV"/>
    <property type="match status" value="1"/>
</dbReference>
<dbReference type="InterPro" id="IPR036377">
    <property type="entry name" value="Gp120_core_sf"/>
</dbReference>
<dbReference type="InterPro" id="IPR037527">
    <property type="entry name" value="Gp160"/>
</dbReference>
<dbReference type="InterPro" id="IPR000328">
    <property type="entry name" value="GP41-like"/>
</dbReference>
<dbReference type="InterPro" id="IPR000777">
    <property type="entry name" value="HIV1_Gp120"/>
</dbReference>
<dbReference type="Pfam" id="PF00516">
    <property type="entry name" value="GP120"/>
    <property type="match status" value="1"/>
</dbReference>
<dbReference type="Pfam" id="PF00517">
    <property type="entry name" value="GP41"/>
    <property type="match status" value="1"/>
</dbReference>
<dbReference type="SUPFAM" id="SSF56502">
    <property type="entry name" value="gp120 core"/>
    <property type="match status" value="2"/>
</dbReference>
<dbReference type="SUPFAM" id="SSF58069">
    <property type="entry name" value="Virus ectodomain"/>
    <property type="match status" value="1"/>
</dbReference>
<accession>Q1A261</accession>
<sequence>MKAMETQRNCRTLSLKEIILCTLVLGIIGIIKCEDNMWVTVYYGVPVWREADTTLFCASDAKAQNPEVHNVWASQACVSTNPNPEEIELTNVTEYFNAWENNMVEQMHEDIVNLWDQSVKPCVKLIPLCVTLNCSLFKCIKENGNTTNCTVQISTGNDSTANNITVGTIDMYNCSFNATTELRDRKKQVYSLFYRQDLEPLEGNKPPEGDKNALYRLYNCNTTAMTQACSKVSLEPIPIHYCAPAGFALLKCNDKNFTGIGQCKNVSTVHCTHGIRPVVSTQFLLNGTLEEKVTVLDRNVSNDMDTIIVKLNETVRLNCTRTGNNTIKGIPIGPSQIFYGIETVIGDTRQAFCQLNKTVWTNTFKKVRHALNETYKGYLGNETITFGPSTGGDLEVTNLHLICGGEFFYCNTSILFNTSIIFNETKDDNITIPCRIRQIVRLWQRVGRGIFLPPIRGTINCISNITGILFAQQKTDRMNKSAMFTPVGGEMRNNWRSELYKYKVVRIEPLGVAPTKAKRRTVHREKRAAVGLGALFLGFLGAAGSTMGAASLTLTVQARQLLSGIVQQQSNLLRAIEAQQHLLQLSVWGIKQLQARVLAVERYLKDQQLLGLWGCSGKLICTTSVPWNTTWTNKSYDDIWYNMTWMQWDKEVSNYTDVIYNLLEKAQTQQENNEKELLELDKWASLWNWFDITSWLWYIKIFIIIVGGLIGLRIVFALLSIVNRVRQGYSPLSFQTLIPARRDRDRPEEIEEGGGEPDNVRSIRLVSGFLALAWNDLRDLCLFLYHRLRDLLLIVLRTLELVGQTLLKGLRRGREALIHLRGILQYWGQELKTSAISLLDTTAIAVAEGTDRIIEIAQRFGRGILNIPRRIRQGLERALL</sequence>
<reference key="1">
    <citation type="journal article" date="2006" name="Science">
        <title>Chimpanzee reservoirs of pandemic and nonpandemic HIV-1.</title>
        <authorList>
            <person name="Keele B.F."/>
            <person name="Van Heuverswyn F."/>
            <person name="Li Y."/>
            <person name="Bailes E."/>
            <person name="Takehisa J."/>
            <person name="Santiago M.L."/>
            <person name="Bibollet-Ruche F."/>
            <person name="Chen Y."/>
            <person name="Wain L.V."/>
            <person name="Liegeois F."/>
            <person name="Loul S."/>
            <person name="Ngole E.M."/>
            <person name="Bienvenue Y."/>
            <person name="Delaporte E."/>
            <person name="Brookfield J.F."/>
            <person name="Sharp P.M."/>
            <person name="Shaw G.M."/>
            <person name="Peeters M."/>
            <person name="Hahn B.H."/>
        </authorList>
    </citation>
    <scope>NUCLEOTIDE SEQUENCE [GENOMIC RNA]</scope>
</reference>
<organism>
    <name type="scientific">Simian immunodeficiency virus (isolate MB66)</name>
    <name type="common">SIV-cpz</name>
    <name type="synonym">Chimpanzee immunodeficiency virus</name>
    <dbReference type="NCBI Taxonomy" id="388911"/>
    <lineage>
        <taxon>Viruses</taxon>
        <taxon>Riboviria</taxon>
        <taxon>Pararnavirae</taxon>
        <taxon>Artverviricota</taxon>
        <taxon>Revtraviricetes</taxon>
        <taxon>Ortervirales</taxon>
        <taxon>Retroviridae</taxon>
        <taxon>Orthoretrovirinae</taxon>
        <taxon>Lentivirus</taxon>
        <taxon>Simian immunodeficiency virus</taxon>
    </lineage>
</organism>
<name>ENV_SIVMB</name>